<dbReference type="EMBL" id="AF041468">
    <property type="protein sequence ID" value="AAC35623.1"/>
    <property type="molecule type" value="Genomic_DNA"/>
</dbReference>
<dbReference type="RefSeq" id="NP_050689.1">
    <property type="nucleotide sequence ID" value="NC_000926.1"/>
</dbReference>
<dbReference type="GeneID" id="856981"/>
<dbReference type="HOGENOM" id="CLU_145470_1_1_1"/>
<dbReference type="OMA" id="DLQYWQQ"/>
<dbReference type="GO" id="GO:0009507">
    <property type="term" value="C:chloroplast"/>
    <property type="evidence" value="ECO:0007669"/>
    <property type="project" value="UniProtKB-SubCell"/>
</dbReference>
<dbReference type="InterPro" id="IPR009666">
    <property type="entry name" value="Uncharacterised_Ycf35"/>
</dbReference>
<dbReference type="PANTHER" id="PTHR39638">
    <property type="entry name" value="YCF35"/>
    <property type="match status" value="1"/>
</dbReference>
<dbReference type="PANTHER" id="PTHR39638:SF2">
    <property type="entry name" value="YCF35"/>
    <property type="match status" value="1"/>
</dbReference>
<dbReference type="Pfam" id="PF06868">
    <property type="entry name" value="DUF1257"/>
    <property type="match status" value="1"/>
</dbReference>
<organism>
    <name type="scientific">Guillardia theta</name>
    <name type="common">Cryptophyte</name>
    <name type="synonym">Cryptomonas phi</name>
    <dbReference type="NCBI Taxonomy" id="55529"/>
    <lineage>
        <taxon>Eukaryota</taxon>
        <taxon>Cryptophyceae</taxon>
        <taxon>Pyrenomonadales</taxon>
        <taxon>Geminigeraceae</taxon>
        <taxon>Guillardia</taxon>
    </lineage>
</organism>
<accession>O78438</accession>
<gene>
    <name type="primary">ycf35</name>
</gene>
<evidence type="ECO:0000305" key="1"/>
<proteinExistence type="inferred from homology"/>
<comment type="subcellular location">
    <subcellularLocation>
        <location>Plastid</location>
        <location>Chloroplast</location>
    </subcellularLocation>
</comment>
<comment type="similarity">
    <text evidence="1">Belongs to the ycf35 family.</text>
</comment>
<name>YCF35_GUITH</name>
<geneLocation type="chloroplast"/>
<sequence length="128" mass="15098">MSHFSKIKTALKDLDLLKQSLNDLAIKWYVKDNIVKGYKDQITFANIVIPQNNNYDIGFVWNGVEYQLVADLQFWQQPWSVEFFLNKLTQRYAYNSILKMANDTGFHPVNETVKENGLIKLTLQRWRP</sequence>
<keyword id="KW-0150">Chloroplast</keyword>
<keyword id="KW-0934">Plastid</keyword>
<reference key="1">
    <citation type="journal article" date="1999" name="J. Mol. Evol.">
        <title>The plastid genome of the cryptophyte alga, Guillardia theta: complete sequence and conserved synteny groups confirm its common ancestry with red algae.</title>
        <authorList>
            <person name="Douglas S.E."/>
            <person name="Penny S.L."/>
        </authorList>
    </citation>
    <scope>NUCLEOTIDE SEQUENCE [LARGE SCALE GENOMIC DNA]</scope>
</reference>
<feature type="chain" id="PRO_0000217348" description="Uncharacterized protein ycf35">
    <location>
        <begin position="1"/>
        <end position="128"/>
    </location>
</feature>
<protein>
    <recommendedName>
        <fullName>Uncharacterized protein ycf35</fullName>
    </recommendedName>
</protein>